<gene>
    <name evidence="1" type="primary">purL</name>
    <name type="ordered locus">SBO_2585</name>
</gene>
<name>PUR4_SHIBS</name>
<keyword id="KW-0067">ATP-binding</keyword>
<keyword id="KW-0963">Cytoplasm</keyword>
<keyword id="KW-0315">Glutamine amidotransferase</keyword>
<keyword id="KW-0436">Ligase</keyword>
<keyword id="KW-0460">Magnesium</keyword>
<keyword id="KW-0479">Metal-binding</keyword>
<keyword id="KW-0547">Nucleotide-binding</keyword>
<keyword id="KW-0658">Purine biosynthesis</keyword>
<organism>
    <name type="scientific">Shigella boydii serotype 4 (strain Sb227)</name>
    <dbReference type="NCBI Taxonomy" id="300268"/>
    <lineage>
        <taxon>Bacteria</taxon>
        <taxon>Pseudomonadati</taxon>
        <taxon>Pseudomonadota</taxon>
        <taxon>Gammaproteobacteria</taxon>
        <taxon>Enterobacterales</taxon>
        <taxon>Enterobacteriaceae</taxon>
        <taxon>Shigella</taxon>
    </lineage>
</organism>
<dbReference type="EC" id="6.3.5.3" evidence="1"/>
<dbReference type="EMBL" id="CP000036">
    <property type="protein sequence ID" value="ABB67128.1"/>
    <property type="molecule type" value="Genomic_DNA"/>
</dbReference>
<dbReference type="RefSeq" id="WP_000970128.1">
    <property type="nucleotide sequence ID" value="NC_007613.1"/>
</dbReference>
<dbReference type="SMR" id="Q31XT0"/>
<dbReference type="KEGG" id="sbo:SBO_2585"/>
<dbReference type="HOGENOM" id="CLU_001031_0_2_6"/>
<dbReference type="UniPathway" id="UPA00074">
    <property type="reaction ID" value="UER00128"/>
</dbReference>
<dbReference type="Proteomes" id="UP000007067">
    <property type="component" value="Chromosome"/>
</dbReference>
<dbReference type="GO" id="GO:0005737">
    <property type="term" value="C:cytoplasm"/>
    <property type="evidence" value="ECO:0007669"/>
    <property type="project" value="UniProtKB-SubCell"/>
</dbReference>
<dbReference type="GO" id="GO:0005524">
    <property type="term" value="F:ATP binding"/>
    <property type="evidence" value="ECO:0007669"/>
    <property type="project" value="UniProtKB-UniRule"/>
</dbReference>
<dbReference type="GO" id="GO:0046872">
    <property type="term" value="F:metal ion binding"/>
    <property type="evidence" value="ECO:0007669"/>
    <property type="project" value="UniProtKB-KW"/>
</dbReference>
<dbReference type="GO" id="GO:0004642">
    <property type="term" value="F:phosphoribosylformylglycinamidine synthase activity"/>
    <property type="evidence" value="ECO:0007669"/>
    <property type="project" value="UniProtKB-UniRule"/>
</dbReference>
<dbReference type="GO" id="GO:0006189">
    <property type="term" value="P:'de novo' IMP biosynthetic process"/>
    <property type="evidence" value="ECO:0007669"/>
    <property type="project" value="UniProtKB-UniRule"/>
</dbReference>
<dbReference type="CDD" id="cd01740">
    <property type="entry name" value="GATase1_FGAR_AT"/>
    <property type="match status" value="1"/>
</dbReference>
<dbReference type="CDD" id="cd02203">
    <property type="entry name" value="PurL_repeat1"/>
    <property type="match status" value="1"/>
</dbReference>
<dbReference type="FunFam" id="1.10.8.750:FF:000002">
    <property type="entry name" value="Phosphoribosylformylglycinamidine synthase"/>
    <property type="match status" value="1"/>
</dbReference>
<dbReference type="FunFam" id="3.30.1330.10:FF:000002">
    <property type="entry name" value="Phosphoribosylformylglycinamidine synthase"/>
    <property type="match status" value="1"/>
</dbReference>
<dbReference type="FunFam" id="3.30.1330.10:FF:000005">
    <property type="entry name" value="Phosphoribosylformylglycinamidine synthase"/>
    <property type="match status" value="1"/>
</dbReference>
<dbReference type="FunFam" id="3.40.50.880:FF:000008">
    <property type="entry name" value="Phosphoribosylformylglycinamidine synthase"/>
    <property type="match status" value="1"/>
</dbReference>
<dbReference type="FunFam" id="3.90.650.10:FF:000002">
    <property type="entry name" value="Phosphoribosylformylglycinamidine synthase"/>
    <property type="match status" value="1"/>
</dbReference>
<dbReference type="FunFam" id="3.90.650.10:FF:000005">
    <property type="entry name" value="Phosphoribosylformylglycinamidine synthase"/>
    <property type="match status" value="1"/>
</dbReference>
<dbReference type="Gene3D" id="3.40.50.880">
    <property type="match status" value="1"/>
</dbReference>
<dbReference type="Gene3D" id="1.10.8.750">
    <property type="entry name" value="Phosphoribosylformylglycinamidine synthase, linker domain"/>
    <property type="match status" value="1"/>
</dbReference>
<dbReference type="Gene3D" id="3.90.650.10">
    <property type="entry name" value="PurM-like C-terminal domain"/>
    <property type="match status" value="2"/>
</dbReference>
<dbReference type="Gene3D" id="3.30.1330.10">
    <property type="entry name" value="PurM-like, N-terminal domain"/>
    <property type="match status" value="2"/>
</dbReference>
<dbReference type="HAMAP" id="MF_00419">
    <property type="entry name" value="PurL_1"/>
    <property type="match status" value="1"/>
</dbReference>
<dbReference type="InterPro" id="IPR029062">
    <property type="entry name" value="Class_I_gatase-like"/>
</dbReference>
<dbReference type="InterPro" id="IPR040707">
    <property type="entry name" value="FGAR-AT_N"/>
</dbReference>
<dbReference type="InterPro" id="IPR055181">
    <property type="entry name" value="FGAR-AT_PurM_N-like"/>
</dbReference>
<dbReference type="InterPro" id="IPR010073">
    <property type="entry name" value="PurL_large"/>
</dbReference>
<dbReference type="InterPro" id="IPR041609">
    <property type="entry name" value="PurL_linker"/>
</dbReference>
<dbReference type="InterPro" id="IPR010918">
    <property type="entry name" value="PurM-like_C_dom"/>
</dbReference>
<dbReference type="InterPro" id="IPR036676">
    <property type="entry name" value="PurM-like_C_sf"/>
</dbReference>
<dbReference type="InterPro" id="IPR036921">
    <property type="entry name" value="PurM-like_N_sf"/>
</dbReference>
<dbReference type="InterPro" id="IPR036604">
    <property type="entry name" value="PurS-like_sf"/>
</dbReference>
<dbReference type="NCBIfam" id="TIGR01735">
    <property type="entry name" value="FGAM_synt"/>
    <property type="match status" value="1"/>
</dbReference>
<dbReference type="NCBIfam" id="NF003672">
    <property type="entry name" value="PRK05297.1"/>
    <property type="match status" value="1"/>
</dbReference>
<dbReference type="PANTHER" id="PTHR10099">
    <property type="entry name" value="PHOSPHORIBOSYLFORMYLGLYCINAMIDINE SYNTHASE"/>
    <property type="match status" value="1"/>
</dbReference>
<dbReference type="PANTHER" id="PTHR10099:SF1">
    <property type="entry name" value="PHOSPHORIBOSYLFORMYLGLYCINAMIDINE SYNTHASE"/>
    <property type="match status" value="1"/>
</dbReference>
<dbReference type="Pfam" id="PF02769">
    <property type="entry name" value="AIRS_C"/>
    <property type="match status" value="2"/>
</dbReference>
<dbReference type="Pfam" id="PF18072">
    <property type="entry name" value="FGAR-AT_linker"/>
    <property type="match status" value="1"/>
</dbReference>
<dbReference type="Pfam" id="PF18076">
    <property type="entry name" value="FGAR-AT_N"/>
    <property type="match status" value="1"/>
</dbReference>
<dbReference type="Pfam" id="PF22689">
    <property type="entry name" value="FGAR-AT_PurM_N-like"/>
    <property type="match status" value="1"/>
</dbReference>
<dbReference type="Pfam" id="PF13507">
    <property type="entry name" value="GATase_5"/>
    <property type="match status" value="1"/>
</dbReference>
<dbReference type="SMART" id="SM01211">
    <property type="entry name" value="GATase_5"/>
    <property type="match status" value="1"/>
</dbReference>
<dbReference type="SUPFAM" id="SSF52317">
    <property type="entry name" value="Class I glutamine amidotransferase-like"/>
    <property type="match status" value="1"/>
</dbReference>
<dbReference type="SUPFAM" id="SSF109736">
    <property type="entry name" value="FGAM synthase PurL, linker domain"/>
    <property type="match status" value="1"/>
</dbReference>
<dbReference type="SUPFAM" id="SSF56042">
    <property type="entry name" value="PurM C-terminal domain-like"/>
    <property type="match status" value="2"/>
</dbReference>
<dbReference type="SUPFAM" id="SSF55326">
    <property type="entry name" value="PurM N-terminal domain-like"/>
    <property type="match status" value="2"/>
</dbReference>
<dbReference type="SUPFAM" id="SSF82697">
    <property type="entry name" value="PurS-like"/>
    <property type="match status" value="1"/>
</dbReference>
<dbReference type="PROSITE" id="PS51273">
    <property type="entry name" value="GATASE_TYPE_1"/>
    <property type="match status" value="1"/>
</dbReference>
<reference key="1">
    <citation type="journal article" date="2005" name="Nucleic Acids Res.">
        <title>Genome dynamics and diversity of Shigella species, the etiologic agents of bacillary dysentery.</title>
        <authorList>
            <person name="Yang F."/>
            <person name="Yang J."/>
            <person name="Zhang X."/>
            <person name="Chen L."/>
            <person name="Jiang Y."/>
            <person name="Yan Y."/>
            <person name="Tang X."/>
            <person name="Wang J."/>
            <person name="Xiong Z."/>
            <person name="Dong J."/>
            <person name="Xue Y."/>
            <person name="Zhu Y."/>
            <person name="Xu X."/>
            <person name="Sun L."/>
            <person name="Chen S."/>
            <person name="Nie H."/>
            <person name="Peng J."/>
            <person name="Xu J."/>
            <person name="Wang Y."/>
            <person name="Yuan Z."/>
            <person name="Wen Y."/>
            <person name="Yao Z."/>
            <person name="Shen Y."/>
            <person name="Qiang B."/>
            <person name="Hou Y."/>
            <person name="Yu J."/>
            <person name="Jin Q."/>
        </authorList>
    </citation>
    <scope>NUCLEOTIDE SEQUENCE [LARGE SCALE GENOMIC DNA]</scope>
    <source>
        <strain>Sb227</strain>
    </source>
</reference>
<feature type="chain" id="PRO_0000264597" description="Phosphoribosylformylglycinamidine synthase">
    <location>
        <begin position="1"/>
        <end position="1295"/>
    </location>
</feature>
<feature type="domain" description="Glutamine amidotransferase type-1" evidence="1">
    <location>
        <begin position="1042"/>
        <end position="1295"/>
    </location>
</feature>
<feature type="region of interest" description="Disordered" evidence="2">
    <location>
        <begin position="305"/>
        <end position="327"/>
    </location>
</feature>
<feature type="active site" description="Nucleophile" evidence="1">
    <location>
        <position position="1135"/>
    </location>
</feature>
<feature type="active site" evidence="1">
    <location>
        <position position="1260"/>
    </location>
</feature>
<feature type="active site" evidence="1">
    <location>
        <position position="1262"/>
    </location>
</feature>
<feature type="binding site" evidence="1">
    <location>
        <begin position="307"/>
        <end position="318"/>
    </location>
    <ligand>
        <name>ATP</name>
        <dbReference type="ChEBI" id="CHEBI:30616"/>
    </ligand>
</feature>
<feature type="binding site" evidence="1">
    <location>
        <position position="678"/>
    </location>
    <ligand>
        <name>ATP</name>
        <dbReference type="ChEBI" id="CHEBI:30616"/>
    </ligand>
</feature>
<feature type="binding site" evidence="1">
    <location>
        <position position="718"/>
    </location>
    <ligand>
        <name>Mg(2+)</name>
        <dbReference type="ChEBI" id="CHEBI:18420"/>
    </ligand>
</feature>
<feature type="binding site" evidence="1">
    <location>
        <position position="722"/>
    </location>
    <ligand>
        <name>Mg(2+)</name>
        <dbReference type="ChEBI" id="CHEBI:18420"/>
    </ligand>
</feature>
<feature type="binding site" evidence="1">
    <location>
        <position position="884"/>
    </location>
    <ligand>
        <name>Mg(2+)</name>
        <dbReference type="ChEBI" id="CHEBI:18420"/>
    </ligand>
</feature>
<feature type="binding site" evidence="1">
    <location>
        <position position="886"/>
    </location>
    <ligand>
        <name>ATP</name>
        <dbReference type="ChEBI" id="CHEBI:30616"/>
    </ligand>
</feature>
<proteinExistence type="inferred from homology"/>
<sequence length="1295" mass="141519">MMEILRGSPALSAFRINKLLARFQAARLPVHNIYAEYVHFADLNAPLNDDEHAQLERLLKYGPALASHAPQGKLLLVTPRPGTISPWSSKATDIAHNCGLQQVNRLERGVAYYIEAGTLTNEQWQQVTAELHDRMMETVFFDLDDAEQLFAHHQPTPVTSVDLLGQGRQALIDANLRLGLALAEDEIDYLQDAFTKLGRNPNDIELYMFAQANSEHCRHKIFNADWIIDGEQQPKSLFRMIKNTFETTPDHVLSAYKDNAAVMEGSEVGRYFADHETGRYDFHQEPAHILMKVETHNHPTAISPWPGAATGSGGEIRDEGATGRGAKPKAGLVGFSVSNLRILGFEQPWEEDFGKPERIVTALDIMTEGPLGGAAFNNEFGRPALNGYFRTYEEKVNSHNGEELRGYHKPIMLAGGIGNIRADHVQKGEINVGAKLVVLGGPAMNIGLGGGAASSMASGQSDADLDFASVQRDNPEMERRCQEVIDRCWQLGDANPILFIHDVGAGGLSNAMPELVSDGGRGGKFELRDILSDEPGMSPLEIWCNESQERYVLAVAADQLPLFDELCKRERAPYAVIGEATEELHLSLHDRHFDNQPIDLPLDVLLGKTPKMTRDVQTLKAKGDALVREGITIADAVKRILHLPTVAEKTFLVTIGDRSVTGMVARDQMVGPWQVPVANCAVTTASLDSYYGEAMAIGERAPVALLDFAASARLAVGEALTNIAATQIGDIKRIKLSANWMAAAGHPGEDAGLYEAVKAVGEELCPALGLTIPVGKDSMSMKTRWQEGNEEREMTSPLSLVISAFARVEDVRHTITPQLSTEDNALLLIDLGKGNNALGATALAQVYRQLGDKPADVRDVAQLKGFYDAIQALVAQRKLLAYHDRSDGGLLVTLAEMAFAGHCGINADIASLGDDRLAALFNEELGAVIQVRAADREAVESVLAQHGLADCVHYVGQAVSGDRFVITANGETVFSESRTTLRVWWAETTWQMQRLRDNPECADQEHQAKSNDADPGLNVKLSFDINEDVAAPYIATGARPKVAVLREQGVNSHVEMAAAFHRAGFDAIDVHMSDLLTGRTGLEDFHALVACGGFSYGDVLGAGEGWAKSILFNDRVRDEFATFFHRPQTLALGVCNGCQMMSNLRELIPGSELWPRFVRNTSDRFEARFSLVEVTQSPSLLLQGMVGSQMPIAVSHGEGRVEVRDAAHLAALESKGLVALRYVDNFGKVTETYPANPNGSPNGITAVTTESGRVTIMMPHPERVFRTVSNSWHPENWGEDGPWMRIFRNARKQLG</sequence>
<comment type="function">
    <text evidence="1">Phosphoribosylformylglycinamidine synthase involved in the purines biosynthetic pathway. Catalyzes the ATP-dependent conversion of formylglycinamide ribonucleotide (FGAR) and glutamine to yield formylglycinamidine ribonucleotide (FGAM) and glutamate.</text>
</comment>
<comment type="catalytic activity">
    <reaction evidence="1">
        <text>N(2)-formyl-N(1)-(5-phospho-beta-D-ribosyl)glycinamide + L-glutamine + ATP + H2O = 2-formamido-N(1)-(5-O-phospho-beta-D-ribosyl)acetamidine + L-glutamate + ADP + phosphate + H(+)</text>
        <dbReference type="Rhea" id="RHEA:17129"/>
        <dbReference type="ChEBI" id="CHEBI:15377"/>
        <dbReference type="ChEBI" id="CHEBI:15378"/>
        <dbReference type="ChEBI" id="CHEBI:29985"/>
        <dbReference type="ChEBI" id="CHEBI:30616"/>
        <dbReference type="ChEBI" id="CHEBI:43474"/>
        <dbReference type="ChEBI" id="CHEBI:58359"/>
        <dbReference type="ChEBI" id="CHEBI:147286"/>
        <dbReference type="ChEBI" id="CHEBI:147287"/>
        <dbReference type="ChEBI" id="CHEBI:456216"/>
        <dbReference type="EC" id="6.3.5.3"/>
    </reaction>
</comment>
<comment type="pathway">
    <text evidence="1">Purine metabolism; IMP biosynthesis via de novo pathway; 5-amino-1-(5-phospho-D-ribosyl)imidazole from N(2)-formyl-N(1)-(5-phospho-D-ribosyl)glycinamide: step 1/2.</text>
</comment>
<comment type="subunit">
    <text evidence="1">Monomer.</text>
</comment>
<comment type="subcellular location">
    <subcellularLocation>
        <location evidence="1">Cytoplasm</location>
    </subcellularLocation>
</comment>
<comment type="similarity">
    <text evidence="1">In the N-terminal section; belongs to the FGAMS family.</text>
</comment>
<accession>Q31XT0</accession>
<evidence type="ECO:0000255" key="1">
    <source>
        <dbReference type="HAMAP-Rule" id="MF_00419"/>
    </source>
</evidence>
<evidence type="ECO:0000256" key="2">
    <source>
        <dbReference type="SAM" id="MobiDB-lite"/>
    </source>
</evidence>
<protein>
    <recommendedName>
        <fullName evidence="1">Phosphoribosylformylglycinamidine synthase</fullName>
        <shortName evidence="1">FGAM synthase</shortName>
        <shortName evidence="1">FGAMS</shortName>
        <ecNumber evidence="1">6.3.5.3</ecNumber>
    </recommendedName>
    <alternativeName>
        <fullName evidence="1">Formylglycinamide ribonucleotide amidotransferase</fullName>
        <shortName evidence="1">FGAR amidotransferase</shortName>
        <shortName evidence="1">FGAR-AT</shortName>
    </alternativeName>
</protein>